<dbReference type="EMBL" id="X69389">
    <property type="protein sequence ID" value="CAA49186.1"/>
    <property type="molecule type" value="mRNA"/>
</dbReference>
<dbReference type="EMBL" id="CU329670">
    <property type="protein sequence ID" value="CAA93587.1"/>
    <property type="molecule type" value="Genomic_DNA"/>
</dbReference>
<dbReference type="PIR" id="S28066">
    <property type="entry name" value="S28066"/>
</dbReference>
<dbReference type="RefSeq" id="NP_593230.1">
    <property type="nucleotide sequence ID" value="NM_001018627.2"/>
</dbReference>
<dbReference type="SMR" id="Q04635"/>
<dbReference type="BioGRID" id="279711">
    <property type="interactions" value="5"/>
</dbReference>
<dbReference type="FunCoup" id="Q04635">
    <property type="interactions" value="1"/>
</dbReference>
<dbReference type="STRING" id="284812.Q04635"/>
<dbReference type="PaxDb" id="4896-SPAC56F8.16.1"/>
<dbReference type="EnsemblFungi" id="SPAC56F8.16.1">
    <property type="protein sequence ID" value="SPAC56F8.16.1:pep"/>
    <property type="gene ID" value="SPAC56F8.16"/>
</dbReference>
<dbReference type="GeneID" id="2543286"/>
<dbReference type="KEGG" id="spo:2543286"/>
<dbReference type="PomBase" id="SPAC56F8.16">
    <property type="gene designation" value="esc1"/>
</dbReference>
<dbReference type="VEuPathDB" id="FungiDB:SPAC56F8.16"/>
<dbReference type="eggNOG" id="KOG2483">
    <property type="taxonomic scope" value="Eukaryota"/>
</dbReference>
<dbReference type="HOGENOM" id="CLU_750395_0_0_1"/>
<dbReference type="InParanoid" id="Q04635"/>
<dbReference type="OMA" id="PINCIAK"/>
<dbReference type="PRO" id="PR:Q04635"/>
<dbReference type="Proteomes" id="UP000002485">
    <property type="component" value="Chromosome I"/>
</dbReference>
<dbReference type="GO" id="GO:0005634">
    <property type="term" value="C:nucleus"/>
    <property type="evidence" value="ECO:0007005"/>
    <property type="project" value="PomBase"/>
</dbReference>
<dbReference type="GO" id="GO:0001228">
    <property type="term" value="F:DNA-binding transcription activator activity, RNA polymerase II-specific"/>
    <property type="evidence" value="ECO:0000304"/>
    <property type="project" value="PomBase"/>
</dbReference>
<dbReference type="GO" id="GO:0046983">
    <property type="term" value="F:protein dimerization activity"/>
    <property type="evidence" value="ECO:0007669"/>
    <property type="project" value="InterPro"/>
</dbReference>
<dbReference type="GO" id="GO:0000978">
    <property type="term" value="F:RNA polymerase II cis-regulatory region sequence-specific DNA binding"/>
    <property type="evidence" value="ECO:0000304"/>
    <property type="project" value="PomBase"/>
</dbReference>
<dbReference type="GO" id="GO:0030154">
    <property type="term" value="P:cell differentiation"/>
    <property type="evidence" value="ECO:0007669"/>
    <property type="project" value="UniProtKB-KW"/>
</dbReference>
<dbReference type="GO" id="GO:0031141">
    <property type="term" value="P:induction of conjugation upon carbon starvation"/>
    <property type="evidence" value="ECO:0000315"/>
    <property type="project" value="PomBase"/>
</dbReference>
<dbReference type="GO" id="GO:0045944">
    <property type="term" value="P:positive regulation of transcription by RNA polymerase II"/>
    <property type="evidence" value="ECO:0000305"/>
    <property type="project" value="PomBase"/>
</dbReference>
<dbReference type="CDD" id="cd19690">
    <property type="entry name" value="bHLHzip_spESC1_like"/>
    <property type="match status" value="1"/>
</dbReference>
<dbReference type="Gene3D" id="4.10.280.10">
    <property type="entry name" value="Helix-loop-helix DNA-binding domain"/>
    <property type="match status" value="1"/>
</dbReference>
<dbReference type="InterPro" id="IPR011598">
    <property type="entry name" value="bHLH_dom"/>
</dbReference>
<dbReference type="InterPro" id="IPR040106">
    <property type="entry name" value="Esc1_bHLHzip"/>
</dbReference>
<dbReference type="InterPro" id="IPR036638">
    <property type="entry name" value="HLH_DNA-bd_sf"/>
</dbReference>
<dbReference type="PANTHER" id="PTHR10328:SF15">
    <property type="entry name" value="BHLH TRANSCRIPTION FACTOR"/>
    <property type="match status" value="1"/>
</dbReference>
<dbReference type="PANTHER" id="PTHR10328">
    <property type="entry name" value="PROTEIN MAX MYC-ASSOCIATED FACTOR X"/>
    <property type="match status" value="1"/>
</dbReference>
<dbReference type="Pfam" id="PF00010">
    <property type="entry name" value="HLH"/>
    <property type="match status" value="1"/>
</dbReference>
<dbReference type="SMART" id="SM00353">
    <property type="entry name" value="HLH"/>
    <property type="match status" value="1"/>
</dbReference>
<dbReference type="SUPFAM" id="SSF47459">
    <property type="entry name" value="HLH, helix-loop-helix DNA-binding domain"/>
    <property type="match status" value="1"/>
</dbReference>
<dbReference type="PROSITE" id="PS50888">
    <property type="entry name" value="BHLH"/>
    <property type="match status" value="1"/>
</dbReference>
<reference key="1">
    <citation type="journal article" date="1993" name="EMBO J.">
        <title>A Schizosaccharomyces pombe gene that promotes sexual differentiation encodes a helix-loop-helix protein with homology to MyoD.</title>
        <authorList>
            <person name="Benton B.K."/>
            <person name="Read M.S."/>
            <person name="Okayama H."/>
        </authorList>
    </citation>
    <scope>NUCLEOTIDE SEQUENCE [MRNA]</scope>
</reference>
<reference key="2">
    <citation type="journal article" date="2002" name="Nature">
        <title>The genome sequence of Schizosaccharomyces pombe.</title>
        <authorList>
            <person name="Wood V."/>
            <person name="Gwilliam R."/>
            <person name="Rajandream M.A."/>
            <person name="Lyne M.H."/>
            <person name="Lyne R."/>
            <person name="Stewart A."/>
            <person name="Sgouros J.G."/>
            <person name="Peat N."/>
            <person name="Hayles J."/>
            <person name="Baker S.G."/>
            <person name="Basham D."/>
            <person name="Bowman S."/>
            <person name="Brooks K."/>
            <person name="Brown D."/>
            <person name="Brown S."/>
            <person name="Chillingworth T."/>
            <person name="Churcher C.M."/>
            <person name="Collins M."/>
            <person name="Connor R."/>
            <person name="Cronin A."/>
            <person name="Davis P."/>
            <person name="Feltwell T."/>
            <person name="Fraser A."/>
            <person name="Gentles S."/>
            <person name="Goble A."/>
            <person name="Hamlin N."/>
            <person name="Harris D.E."/>
            <person name="Hidalgo J."/>
            <person name="Hodgson G."/>
            <person name="Holroyd S."/>
            <person name="Hornsby T."/>
            <person name="Howarth S."/>
            <person name="Huckle E.J."/>
            <person name="Hunt S."/>
            <person name="Jagels K."/>
            <person name="James K.D."/>
            <person name="Jones L."/>
            <person name="Jones M."/>
            <person name="Leather S."/>
            <person name="McDonald S."/>
            <person name="McLean J."/>
            <person name="Mooney P."/>
            <person name="Moule S."/>
            <person name="Mungall K.L."/>
            <person name="Murphy L.D."/>
            <person name="Niblett D."/>
            <person name="Odell C."/>
            <person name="Oliver K."/>
            <person name="O'Neil S."/>
            <person name="Pearson D."/>
            <person name="Quail M.A."/>
            <person name="Rabbinowitsch E."/>
            <person name="Rutherford K.M."/>
            <person name="Rutter S."/>
            <person name="Saunders D."/>
            <person name="Seeger K."/>
            <person name="Sharp S."/>
            <person name="Skelton J."/>
            <person name="Simmonds M.N."/>
            <person name="Squares R."/>
            <person name="Squares S."/>
            <person name="Stevens K."/>
            <person name="Taylor K."/>
            <person name="Taylor R.G."/>
            <person name="Tivey A."/>
            <person name="Walsh S.V."/>
            <person name="Warren T."/>
            <person name="Whitehead S."/>
            <person name="Woodward J.R."/>
            <person name="Volckaert G."/>
            <person name="Aert R."/>
            <person name="Robben J."/>
            <person name="Grymonprez B."/>
            <person name="Weltjens I."/>
            <person name="Vanstreels E."/>
            <person name="Rieger M."/>
            <person name="Schaefer M."/>
            <person name="Mueller-Auer S."/>
            <person name="Gabel C."/>
            <person name="Fuchs M."/>
            <person name="Duesterhoeft A."/>
            <person name="Fritzc C."/>
            <person name="Holzer E."/>
            <person name="Moestl D."/>
            <person name="Hilbert H."/>
            <person name="Borzym K."/>
            <person name="Langer I."/>
            <person name="Beck A."/>
            <person name="Lehrach H."/>
            <person name="Reinhardt R."/>
            <person name="Pohl T.M."/>
            <person name="Eger P."/>
            <person name="Zimmermann W."/>
            <person name="Wedler H."/>
            <person name="Wambutt R."/>
            <person name="Purnelle B."/>
            <person name="Goffeau A."/>
            <person name="Cadieu E."/>
            <person name="Dreano S."/>
            <person name="Gloux S."/>
            <person name="Lelaure V."/>
            <person name="Mottier S."/>
            <person name="Galibert F."/>
            <person name="Aves S.J."/>
            <person name="Xiang Z."/>
            <person name="Hunt C."/>
            <person name="Moore K."/>
            <person name="Hurst S.M."/>
            <person name="Lucas M."/>
            <person name="Rochet M."/>
            <person name="Gaillardin C."/>
            <person name="Tallada V.A."/>
            <person name="Garzon A."/>
            <person name="Thode G."/>
            <person name="Daga R.R."/>
            <person name="Cruzado L."/>
            <person name="Jimenez J."/>
            <person name="Sanchez M."/>
            <person name="del Rey F."/>
            <person name="Benito J."/>
            <person name="Dominguez A."/>
            <person name="Revuelta J.L."/>
            <person name="Moreno S."/>
            <person name="Armstrong J."/>
            <person name="Forsburg S.L."/>
            <person name="Cerutti L."/>
            <person name="Lowe T."/>
            <person name="McCombie W.R."/>
            <person name="Paulsen I."/>
            <person name="Potashkin J."/>
            <person name="Shpakovski G.V."/>
            <person name="Ussery D."/>
            <person name="Barrell B.G."/>
            <person name="Nurse P."/>
        </authorList>
    </citation>
    <scope>NUCLEOTIDE SEQUENCE [LARGE SCALE GENOMIC DNA]</scope>
    <source>
        <strain>972 / ATCC 24843</strain>
    </source>
</reference>
<accession>Q04635</accession>
<gene>
    <name type="primary">esc1</name>
    <name type="ORF">SPAC56F8.16</name>
</gene>
<evidence type="ECO:0000255" key="1">
    <source>
        <dbReference type="PROSITE-ProRule" id="PRU00981"/>
    </source>
</evidence>
<evidence type="ECO:0000256" key="2">
    <source>
        <dbReference type="SAM" id="MobiDB-lite"/>
    </source>
</evidence>
<evidence type="ECO:0000305" key="3"/>
<organism>
    <name type="scientific">Schizosaccharomyces pombe (strain 972 / ATCC 24843)</name>
    <name type="common">Fission yeast</name>
    <dbReference type="NCBI Taxonomy" id="284812"/>
    <lineage>
        <taxon>Eukaryota</taxon>
        <taxon>Fungi</taxon>
        <taxon>Dikarya</taxon>
        <taxon>Ascomycota</taxon>
        <taxon>Taphrinomycotina</taxon>
        <taxon>Schizosaccharomycetes</taxon>
        <taxon>Schizosaccharomycetales</taxon>
        <taxon>Schizosaccharomycetaceae</taxon>
        <taxon>Schizosaccharomyces</taxon>
    </lineage>
</organism>
<comment type="function">
    <text>Involved in the sexual differentiation process. Modulate the ability of the cell to differentiate in response to the nitrogen starvation signal; in particular in response to decreases in the level of cellular cAMP.</text>
</comment>
<comment type="subunit">
    <text>Efficient DNA binding requires dimerization with another bHLH protein.</text>
</comment>
<comment type="subcellular location">
    <subcellularLocation>
        <location evidence="3">Nucleus</location>
    </subcellularLocation>
</comment>
<feature type="chain" id="PRO_0000127170" description="Protein esc1">
    <location>
        <begin position="1"/>
        <end position="413"/>
    </location>
</feature>
<feature type="domain" description="bHLH" evidence="1">
    <location>
        <begin position="334"/>
        <end position="385"/>
    </location>
</feature>
<feature type="region of interest" description="Disordered" evidence="2">
    <location>
        <begin position="1"/>
        <end position="202"/>
    </location>
</feature>
<feature type="region of interest" description="Disordered" evidence="2">
    <location>
        <begin position="230"/>
        <end position="265"/>
    </location>
</feature>
<feature type="compositionally biased region" description="Polar residues" evidence="2">
    <location>
        <begin position="1"/>
        <end position="22"/>
    </location>
</feature>
<feature type="compositionally biased region" description="Low complexity" evidence="2">
    <location>
        <begin position="23"/>
        <end position="42"/>
    </location>
</feature>
<feature type="compositionally biased region" description="Polar residues" evidence="2">
    <location>
        <begin position="43"/>
        <end position="63"/>
    </location>
</feature>
<feature type="compositionally biased region" description="Low complexity" evidence="2">
    <location>
        <begin position="86"/>
        <end position="103"/>
    </location>
</feature>
<feature type="compositionally biased region" description="Low complexity" evidence="2">
    <location>
        <begin position="116"/>
        <end position="126"/>
    </location>
</feature>
<feature type="compositionally biased region" description="Polar residues" evidence="2">
    <location>
        <begin position="127"/>
        <end position="136"/>
    </location>
</feature>
<feature type="compositionally biased region" description="Low complexity" evidence="2">
    <location>
        <begin position="150"/>
        <end position="197"/>
    </location>
</feature>
<sequence>MSSYALPSMQPTPTSSIPLRQMSQPTTSAPSNSASSTPYSPQQVPLTHNSYPLSTPSSFQHGQTRLPPINCLAEPFNRPQPWHSNSAAPASSSPTSATLSTAAHPVHTNAAQVAGSSSSYVYSVPPTNSTTSQASAKHSAVPHRSSQFQSTTLTPSTTDSSSTDVSSSDSVSTSASSSNASNTVSVTSPASSSATPLPNQPSQQQFLVSKNDAFTTFVHSVHNTPMQQSMYVPQQQTSHSSGASYQNESANPPVQSPMQYSYSQGQPFSYPQHKNQSFSASPIDPSMSYVYRAPESFSSINANVPYGRNEYLRRVTSLVPNQPEYTGPYTRNPELRTSHKLAERKRRKEIKELFDDLKDALPLDKSTKSSKWGLLTRAIQYIEQLKSEQVALEAYVKSLEENMQSNKEVTKGT</sequence>
<proteinExistence type="evidence at transcript level"/>
<name>ESC1_SCHPO</name>
<keyword id="KW-0221">Differentiation</keyword>
<keyword id="KW-0238">DNA-binding</keyword>
<keyword id="KW-0539">Nucleus</keyword>
<keyword id="KW-1185">Reference proteome</keyword>
<protein>
    <recommendedName>
        <fullName>Protein esc1</fullName>
    </recommendedName>
</protein>